<reference key="1">
    <citation type="journal article" date="2006" name="Proc. Natl. Acad. Sci. U.S.A.">
        <title>Burkholderia xenovorans LB400 harbors a multi-replicon, 9.73-Mbp genome shaped for versatility.</title>
        <authorList>
            <person name="Chain P.S.G."/>
            <person name="Denef V.J."/>
            <person name="Konstantinidis K.T."/>
            <person name="Vergez L.M."/>
            <person name="Agullo L."/>
            <person name="Reyes V.L."/>
            <person name="Hauser L."/>
            <person name="Cordova M."/>
            <person name="Gomez L."/>
            <person name="Gonzalez M."/>
            <person name="Land M."/>
            <person name="Lao V."/>
            <person name="Larimer F."/>
            <person name="LiPuma J.J."/>
            <person name="Mahenthiralingam E."/>
            <person name="Malfatti S.A."/>
            <person name="Marx C.J."/>
            <person name="Parnell J.J."/>
            <person name="Ramette A."/>
            <person name="Richardson P."/>
            <person name="Seeger M."/>
            <person name="Smith D."/>
            <person name="Spilker T."/>
            <person name="Sul W.J."/>
            <person name="Tsoi T.V."/>
            <person name="Ulrich L.E."/>
            <person name="Zhulin I.B."/>
            <person name="Tiedje J.M."/>
        </authorList>
    </citation>
    <scope>NUCLEOTIDE SEQUENCE [LARGE SCALE GENOMIC DNA]</scope>
    <source>
        <strain>LB400</strain>
    </source>
</reference>
<evidence type="ECO:0000255" key="1">
    <source>
        <dbReference type="HAMAP-Rule" id="MF_00451"/>
    </source>
</evidence>
<name>NDK_PARXL</name>
<dbReference type="EC" id="2.7.4.6" evidence="1"/>
<dbReference type="EMBL" id="CP000270">
    <property type="protein sequence ID" value="ABE31364.1"/>
    <property type="molecule type" value="Genomic_DNA"/>
</dbReference>
<dbReference type="RefSeq" id="WP_007181343.1">
    <property type="nucleotide sequence ID" value="NZ_CP008760.1"/>
</dbReference>
<dbReference type="SMR" id="Q13X25"/>
<dbReference type="STRING" id="266265.Bxe_A1591"/>
<dbReference type="KEGG" id="bxb:DR64_3751"/>
<dbReference type="KEGG" id="bxe:Bxe_A1591"/>
<dbReference type="eggNOG" id="COG0105">
    <property type="taxonomic scope" value="Bacteria"/>
</dbReference>
<dbReference type="OrthoDB" id="9801161at2"/>
<dbReference type="Proteomes" id="UP000001817">
    <property type="component" value="Chromosome 1"/>
</dbReference>
<dbReference type="GO" id="GO:0005737">
    <property type="term" value="C:cytoplasm"/>
    <property type="evidence" value="ECO:0007669"/>
    <property type="project" value="UniProtKB-SubCell"/>
</dbReference>
<dbReference type="GO" id="GO:0005524">
    <property type="term" value="F:ATP binding"/>
    <property type="evidence" value="ECO:0007669"/>
    <property type="project" value="UniProtKB-UniRule"/>
</dbReference>
<dbReference type="GO" id="GO:0046872">
    <property type="term" value="F:metal ion binding"/>
    <property type="evidence" value="ECO:0007669"/>
    <property type="project" value="UniProtKB-KW"/>
</dbReference>
<dbReference type="GO" id="GO:0004550">
    <property type="term" value="F:nucleoside diphosphate kinase activity"/>
    <property type="evidence" value="ECO:0007669"/>
    <property type="project" value="UniProtKB-UniRule"/>
</dbReference>
<dbReference type="GO" id="GO:0006241">
    <property type="term" value="P:CTP biosynthetic process"/>
    <property type="evidence" value="ECO:0007669"/>
    <property type="project" value="UniProtKB-UniRule"/>
</dbReference>
<dbReference type="GO" id="GO:0006183">
    <property type="term" value="P:GTP biosynthetic process"/>
    <property type="evidence" value="ECO:0007669"/>
    <property type="project" value="UniProtKB-UniRule"/>
</dbReference>
<dbReference type="GO" id="GO:0006228">
    <property type="term" value="P:UTP biosynthetic process"/>
    <property type="evidence" value="ECO:0007669"/>
    <property type="project" value="UniProtKB-UniRule"/>
</dbReference>
<dbReference type="CDD" id="cd04413">
    <property type="entry name" value="NDPk_I"/>
    <property type="match status" value="1"/>
</dbReference>
<dbReference type="FunFam" id="3.30.70.141:FF:000001">
    <property type="entry name" value="Nucleoside diphosphate kinase"/>
    <property type="match status" value="1"/>
</dbReference>
<dbReference type="Gene3D" id="3.30.70.141">
    <property type="entry name" value="Nucleoside diphosphate kinase-like domain"/>
    <property type="match status" value="1"/>
</dbReference>
<dbReference type="HAMAP" id="MF_00451">
    <property type="entry name" value="NDP_kinase"/>
    <property type="match status" value="1"/>
</dbReference>
<dbReference type="InterPro" id="IPR034907">
    <property type="entry name" value="NDK-like_dom"/>
</dbReference>
<dbReference type="InterPro" id="IPR036850">
    <property type="entry name" value="NDK-like_dom_sf"/>
</dbReference>
<dbReference type="InterPro" id="IPR001564">
    <property type="entry name" value="Nucleoside_diP_kinase"/>
</dbReference>
<dbReference type="InterPro" id="IPR023005">
    <property type="entry name" value="Nucleoside_diP_kinase_AS"/>
</dbReference>
<dbReference type="NCBIfam" id="NF001908">
    <property type="entry name" value="PRK00668.1"/>
    <property type="match status" value="1"/>
</dbReference>
<dbReference type="PANTHER" id="PTHR46161">
    <property type="entry name" value="NUCLEOSIDE DIPHOSPHATE KINASE"/>
    <property type="match status" value="1"/>
</dbReference>
<dbReference type="PANTHER" id="PTHR46161:SF3">
    <property type="entry name" value="NUCLEOSIDE DIPHOSPHATE KINASE DDB_G0292928-RELATED"/>
    <property type="match status" value="1"/>
</dbReference>
<dbReference type="Pfam" id="PF00334">
    <property type="entry name" value="NDK"/>
    <property type="match status" value="1"/>
</dbReference>
<dbReference type="PRINTS" id="PR01243">
    <property type="entry name" value="NUCDPKINASE"/>
</dbReference>
<dbReference type="SMART" id="SM00562">
    <property type="entry name" value="NDK"/>
    <property type="match status" value="1"/>
</dbReference>
<dbReference type="SUPFAM" id="SSF54919">
    <property type="entry name" value="Nucleoside diphosphate kinase, NDK"/>
    <property type="match status" value="1"/>
</dbReference>
<dbReference type="PROSITE" id="PS00469">
    <property type="entry name" value="NDPK"/>
    <property type="match status" value="1"/>
</dbReference>
<dbReference type="PROSITE" id="PS51374">
    <property type="entry name" value="NDPK_LIKE"/>
    <property type="match status" value="1"/>
</dbReference>
<proteinExistence type="inferred from homology"/>
<keyword id="KW-0067">ATP-binding</keyword>
<keyword id="KW-0963">Cytoplasm</keyword>
<keyword id="KW-0418">Kinase</keyword>
<keyword id="KW-0460">Magnesium</keyword>
<keyword id="KW-0479">Metal-binding</keyword>
<keyword id="KW-0546">Nucleotide metabolism</keyword>
<keyword id="KW-0547">Nucleotide-binding</keyword>
<keyword id="KW-0597">Phosphoprotein</keyword>
<keyword id="KW-1185">Reference proteome</keyword>
<keyword id="KW-0808">Transferase</keyword>
<gene>
    <name evidence="1" type="primary">ndk</name>
    <name type="ordered locus">Bxeno_A2826</name>
    <name type="ORF">Bxe_A1591</name>
</gene>
<comment type="function">
    <text evidence="1">Major role in the synthesis of nucleoside triphosphates other than ATP. The ATP gamma phosphate is transferred to the NDP beta phosphate via a ping-pong mechanism, using a phosphorylated active-site intermediate.</text>
</comment>
<comment type="catalytic activity">
    <reaction evidence="1">
        <text>a 2'-deoxyribonucleoside 5'-diphosphate + ATP = a 2'-deoxyribonucleoside 5'-triphosphate + ADP</text>
        <dbReference type="Rhea" id="RHEA:44640"/>
        <dbReference type="ChEBI" id="CHEBI:30616"/>
        <dbReference type="ChEBI" id="CHEBI:61560"/>
        <dbReference type="ChEBI" id="CHEBI:73316"/>
        <dbReference type="ChEBI" id="CHEBI:456216"/>
        <dbReference type="EC" id="2.7.4.6"/>
    </reaction>
</comment>
<comment type="catalytic activity">
    <reaction evidence="1">
        <text>a ribonucleoside 5'-diphosphate + ATP = a ribonucleoside 5'-triphosphate + ADP</text>
        <dbReference type="Rhea" id="RHEA:18113"/>
        <dbReference type="ChEBI" id="CHEBI:30616"/>
        <dbReference type="ChEBI" id="CHEBI:57930"/>
        <dbReference type="ChEBI" id="CHEBI:61557"/>
        <dbReference type="ChEBI" id="CHEBI:456216"/>
        <dbReference type="EC" id="2.7.4.6"/>
    </reaction>
</comment>
<comment type="cofactor">
    <cofactor evidence="1">
        <name>Mg(2+)</name>
        <dbReference type="ChEBI" id="CHEBI:18420"/>
    </cofactor>
</comment>
<comment type="subunit">
    <text evidence="1">Homotetramer.</text>
</comment>
<comment type="subcellular location">
    <subcellularLocation>
        <location evidence="1">Cytoplasm</location>
    </subcellularLocation>
</comment>
<comment type="similarity">
    <text evidence="1">Belongs to the NDK family.</text>
</comment>
<sequence length="141" mass="15434">MAIERTLSIIKPDAVAKNVIGQIYTRFENAGLKIVASRMVHLSRADAEKFYAVHAARPFFKDLVDFMISGPVVVQALEGENAILKHRDLMGATDPKKAEKGTIRADFADSIDANAVHGSDAPETAAVEIAFFFPQVNVYSR</sequence>
<protein>
    <recommendedName>
        <fullName evidence="1">Nucleoside diphosphate kinase</fullName>
        <shortName evidence="1">NDK</shortName>
        <shortName evidence="1">NDP kinase</shortName>
        <ecNumber evidence="1">2.7.4.6</ecNumber>
    </recommendedName>
    <alternativeName>
        <fullName evidence="1">Nucleoside-2-P kinase</fullName>
    </alternativeName>
</protein>
<organism>
    <name type="scientific">Paraburkholderia xenovorans (strain LB400)</name>
    <dbReference type="NCBI Taxonomy" id="266265"/>
    <lineage>
        <taxon>Bacteria</taxon>
        <taxon>Pseudomonadati</taxon>
        <taxon>Pseudomonadota</taxon>
        <taxon>Betaproteobacteria</taxon>
        <taxon>Burkholderiales</taxon>
        <taxon>Burkholderiaceae</taxon>
        <taxon>Paraburkholderia</taxon>
    </lineage>
</organism>
<feature type="chain" id="PRO_0000267771" description="Nucleoside diphosphate kinase">
    <location>
        <begin position="1"/>
        <end position="141"/>
    </location>
</feature>
<feature type="active site" description="Pros-phosphohistidine intermediate" evidence="1">
    <location>
        <position position="117"/>
    </location>
</feature>
<feature type="binding site" evidence="1">
    <location>
        <position position="11"/>
    </location>
    <ligand>
        <name>ATP</name>
        <dbReference type="ChEBI" id="CHEBI:30616"/>
    </ligand>
</feature>
<feature type="binding site" evidence="1">
    <location>
        <position position="59"/>
    </location>
    <ligand>
        <name>ATP</name>
        <dbReference type="ChEBI" id="CHEBI:30616"/>
    </ligand>
</feature>
<feature type="binding site" evidence="1">
    <location>
        <position position="87"/>
    </location>
    <ligand>
        <name>ATP</name>
        <dbReference type="ChEBI" id="CHEBI:30616"/>
    </ligand>
</feature>
<feature type="binding site" evidence="1">
    <location>
        <position position="93"/>
    </location>
    <ligand>
        <name>ATP</name>
        <dbReference type="ChEBI" id="CHEBI:30616"/>
    </ligand>
</feature>
<feature type="binding site" evidence="1">
    <location>
        <position position="104"/>
    </location>
    <ligand>
        <name>ATP</name>
        <dbReference type="ChEBI" id="CHEBI:30616"/>
    </ligand>
</feature>
<feature type="binding site" evidence="1">
    <location>
        <position position="114"/>
    </location>
    <ligand>
        <name>ATP</name>
        <dbReference type="ChEBI" id="CHEBI:30616"/>
    </ligand>
</feature>
<accession>Q13X25</accession>